<keyword id="KW-0004">4Fe-4S</keyword>
<keyword id="KW-0997">Cell inner membrane</keyword>
<keyword id="KW-1003">Cell membrane</keyword>
<keyword id="KW-0408">Iron</keyword>
<keyword id="KW-0411">Iron-sulfur</keyword>
<keyword id="KW-0472">Membrane</keyword>
<keyword id="KW-0479">Metal-binding</keyword>
<keyword id="KW-0520">NAD</keyword>
<keyword id="KW-0874">Quinone</keyword>
<keyword id="KW-0677">Repeat</keyword>
<keyword id="KW-1278">Translocase</keyword>
<keyword id="KW-0830">Ubiquinone</keyword>
<accession>A9IUN3</accession>
<gene>
    <name evidence="1" type="primary">nuoI</name>
    <name type="ordered locus">BT_1209</name>
</gene>
<reference key="1">
    <citation type="journal article" date="2007" name="Nat. Genet.">
        <title>Genomic analysis of Bartonella identifies type IV secretion systems as host adaptability factors.</title>
        <authorList>
            <person name="Saenz H.L."/>
            <person name="Engel P."/>
            <person name="Stoeckli M.C."/>
            <person name="Lanz C."/>
            <person name="Raddatz G."/>
            <person name="Vayssier-Taussat M."/>
            <person name="Birtles R."/>
            <person name="Schuster S.C."/>
            <person name="Dehio C."/>
        </authorList>
    </citation>
    <scope>NUCLEOTIDE SEQUENCE [LARGE SCALE GENOMIC DNA]</scope>
    <source>
        <strain>CIP 105476 / IBS 506</strain>
    </source>
</reference>
<sequence length="163" mass="18934">MSGFIQAAKSLLLLEFVSAFFLAMRQFFSPKPTINYPYEKGFVSQRFRGEHALRRYPNGEERCIACKLCEAICPAQAITIEAGPRRNDGTRRTVRYDIDMVKCIYCGFCQEACPVEAIVEGPNFEFATETREELYYDKEKLLMNGDRWEREIARNILMDAPYR</sequence>
<evidence type="ECO:0000255" key="1">
    <source>
        <dbReference type="HAMAP-Rule" id="MF_01351"/>
    </source>
</evidence>
<feature type="chain" id="PRO_1000086950" description="NADH-quinone oxidoreductase subunit I">
    <location>
        <begin position="1"/>
        <end position="163"/>
    </location>
</feature>
<feature type="domain" description="4Fe-4S ferredoxin-type 1" evidence="1">
    <location>
        <begin position="53"/>
        <end position="83"/>
    </location>
</feature>
<feature type="domain" description="4Fe-4S ferredoxin-type 2" evidence="1">
    <location>
        <begin position="94"/>
        <end position="123"/>
    </location>
</feature>
<feature type="binding site" evidence="1">
    <location>
        <position position="63"/>
    </location>
    <ligand>
        <name>[4Fe-4S] cluster</name>
        <dbReference type="ChEBI" id="CHEBI:49883"/>
        <label>1</label>
    </ligand>
</feature>
<feature type="binding site" evidence="1">
    <location>
        <position position="66"/>
    </location>
    <ligand>
        <name>[4Fe-4S] cluster</name>
        <dbReference type="ChEBI" id="CHEBI:49883"/>
        <label>1</label>
    </ligand>
</feature>
<feature type="binding site" evidence="1">
    <location>
        <position position="69"/>
    </location>
    <ligand>
        <name>[4Fe-4S] cluster</name>
        <dbReference type="ChEBI" id="CHEBI:49883"/>
        <label>1</label>
    </ligand>
</feature>
<feature type="binding site" evidence="1">
    <location>
        <position position="73"/>
    </location>
    <ligand>
        <name>[4Fe-4S] cluster</name>
        <dbReference type="ChEBI" id="CHEBI:49883"/>
        <label>2</label>
    </ligand>
</feature>
<feature type="binding site" evidence="1">
    <location>
        <position position="103"/>
    </location>
    <ligand>
        <name>[4Fe-4S] cluster</name>
        <dbReference type="ChEBI" id="CHEBI:49883"/>
        <label>2</label>
    </ligand>
</feature>
<feature type="binding site" evidence="1">
    <location>
        <position position="106"/>
    </location>
    <ligand>
        <name>[4Fe-4S] cluster</name>
        <dbReference type="ChEBI" id="CHEBI:49883"/>
        <label>2</label>
    </ligand>
</feature>
<feature type="binding site" evidence="1">
    <location>
        <position position="109"/>
    </location>
    <ligand>
        <name>[4Fe-4S] cluster</name>
        <dbReference type="ChEBI" id="CHEBI:49883"/>
        <label>2</label>
    </ligand>
</feature>
<feature type="binding site" evidence="1">
    <location>
        <position position="113"/>
    </location>
    <ligand>
        <name>[4Fe-4S] cluster</name>
        <dbReference type="ChEBI" id="CHEBI:49883"/>
        <label>1</label>
    </ligand>
</feature>
<name>NUOI_BART1</name>
<organism>
    <name type="scientific">Bartonella tribocorum (strain CIP 105476 / IBS 506)</name>
    <dbReference type="NCBI Taxonomy" id="382640"/>
    <lineage>
        <taxon>Bacteria</taxon>
        <taxon>Pseudomonadati</taxon>
        <taxon>Pseudomonadota</taxon>
        <taxon>Alphaproteobacteria</taxon>
        <taxon>Hyphomicrobiales</taxon>
        <taxon>Bartonellaceae</taxon>
        <taxon>Bartonella</taxon>
    </lineage>
</organism>
<protein>
    <recommendedName>
        <fullName evidence="1">NADH-quinone oxidoreductase subunit I</fullName>
        <ecNumber evidence="1">7.1.1.-</ecNumber>
    </recommendedName>
    <alternativeName>
        <fullName evidence="1">NADH dehydrogenase I subunit I</fullName>
    </alternativeName>
    <alternativeName>
        <fullName evidence="1">NDH-1 subunit I</fullName>
    </alternativeName>
</protein>
<proteinExistence type="inferred from homology"/>
<comment type="function">
    <text evidence="1">NDH-1 shuttles electrons from NADH, via FMN and iron-sulfur (Fe-S) centers, to quinones in the respiratory chain. The immediate electron acceptor for the enzyme in this species is believed to be ubiquinone. Couples the redox reaction to proton translocation (for every two electrons transferred, four hydrogen ions are translocated across the cytoplasmic membrane), and thus conserves the redox energy in a proton gradient.</text>
</comment>
<comment type="catalytic activity">
    <reaction evidence="1">
        <text>a quinone + NADH + 5 H(+)(in) = a quinol + NAD(+) + 4 H(+)(out)</text>
        <dbReference type="Rhea" id="RHEA:57888"/>
        <dbReference type="ChEBI" id="CHEBI:15378"/>
        <dbReference type="ChEBI" id="CHEBI:24646"/>
        <dbReference type="ChEBI" id="CHEBI:57540"/>
        <dbReference type="ChEBI" id="CHEBI:57945"/>
        <dbReference type="ChEBI" id="CHEBI:132124"/>
    </reaction>
</comment>
<comment type="cofactor">
    <cofactor evidence="1">
        <name>[4Fe-4S] cluster</name>
        <dbReference type="ChEBI" id="CHEBI:49883"/>
    </cofactor>
    <text evidence="1">Binds 2 [4Fe-4S] clusters per subunit.</text>
</comment>
<comment type="subunit">
    <text evidence="1">NDH-1 is composed of 14 different subunits. Subunits NuoA, H, J, K, L, M, N constitute the membrane sector of the complex.</text>
</comment>
<comment type="subcellular location">
    <subcellularLocation>
        <location evidence="1">Cell inner membrane</location>
        <topology evidence="1">Peripheral membrane protein</topology>
    </subcellularLocation>
</comment>
<comment type="similarity">
    <text evidence="1">Belongs to the complex I 23 kDa subunit family.</text>
</comment>
<dbReference type="EC" id="7.1.1.-" evidence="1"/>
<dbReference type="EMBL" id="AM260525">
    <property type="protein sequence ID" value="CAK01579.1"/>
    <property type="molecule type" value="Genomic_DNA"/>
</dbReference>
<dbReference type="RefSeq" id="WP_004860049.1">
    <property type="nucleotide sequence ID" value="NC_010161.1"/>
</dbReference>
<dbReference type="SMR" id="A9IUN3"/>
<dbReference type="KEGG" id="btr:BT_1209"/>
<dbReference type="eggNOG" id="COG1143">
    <property type="taxonomic scope" value="Bacteria"/>
</dbReference>
<dbReference type="HOGENOM" id="CLU_067218_5_1_5"/>
<dbReference type="Proteomes" id="UP000001592">
    <property type="component" value="Chromosome"/>
</dbReference>
<dbReference type="GO" id="GO:0005886">
    <property type="term" value="C:plasma membrane"/>
    <property type="evidence" value="ECO:0007669"/>
    <property type="project" value="UniProtKB-SubCell"/>
</dbReference>
<dbReference type="GO" id="GO:0051539">
    <property type="term" value="F:4 iron, 4 sulfur cluster binding"/>
    <property type="evidence" value="ECO:0007669"/>
    <property type="project" value="UniProtKB-KW"/>
</dbReference>
<dbReference type="GO" id="GO:0005506">
    <property type="term" value="F:iron ion binding"/>
    <property type="evidence" value="ECO:0007669"/>
    <property type="project" value="UniProtKB-UniRule"/>
</dbReference>
<dbReference type="GO" id="GO:0050136">
    <property type="term" value="F:NADH:ubiquinone reductase (non-electrogenic) activity"/>
    <property type="evidence" value="ECO:0007669"/>
    <property type="project" value="UniProtKB-UniRule"/>
</dbReference>
<dbReference type="GO" id="GO:0048038">
    <property type="term" value="F:quinone binding"/>
    <property type="evidence" value="ECO:0007669"/>
    <property type="project" value="UniProtKB-KW"/>
</dbReference>
<dbReference type="GO" id="GO:0009060">
    <property type="term" value="P:aerobic respiration"/>
    <property type="evidence" value="ECO:0007669"/>
    <property type="project" value="TreeGrafter"/>
</dbReference>
<dbReference type="FunFam" id="3.30.70.3270:FF:000001">
    <property type="entry name" value="NADH-quinone oxidoreductase subunit I 1"/>
    <property type="match status" value="1"/>
</dbReference>
<dbReference type="Gene3D" id="3.30.70.3270">
    <property type="match status" value="1"/>
</dbReference>
<dbReference type="HAMAP" id="MF_01351">
    <property type="entry name" value="NDH1_NuoI"/>
    <property type="match status" value="1"/>
</dbReference>
<dbReference type="InterPro" id="IPR017896">
    <property type="entry name" value="4Fe4S_Fe-S-bd"/>
</dbReference>
<dbReference type="InterPro" id="IPR017900">
    <property type="entry name" value="4Fe4S_Fe_S_CS"/>
</dbReference>
<dbReference type="InterPro" id="IPR010226">
    <property type="entry name" value="NADH_quinone_OxRdtase_chainI"/>
</dbReference>
<dbReference type="NCBIfam" id="TIGR01971">
    <property type="entry name" value="NuoI"/>
    <property type="match status" value="1"/>
</dbReference>
<dbReference type="NCBIfam" id="NF004538">
    <property type="entry name" value="PRK05888.1-4"/>
    <property type="match status" value="1"/>
</dbReference>
<dbReference type="NCBIfam" id="NF004539">
    <property type="entry name" value="PRK05888.1-5"/>
    <property type="match status" value="1"/>
</dbReference>
<dbReference type="PANTHER" id="PTHR10849:SF20">
    <property type="entry name" value="NADH DEHYDROGENASE [UBIQUINONE] IRON-SULFUR PROTEIN 8, MITOCHONDRIAL"/>
    <property type="match status" value="1"/>
</dbReference>
<dbReference type="PANTHER" id="PTHR10849">
    <property type="entry name" value="NADH DEHYDROGENASE UBIQUINONE IRON-SULFUR PROTEIN 8, MITOCHONDRIAL"/>
    <property type="match status" value="1"/>
</dbReference>
<dbReference type="Pfam" id="PF12838">
    <property type="entry name" value="Fer4_7"/>
    <property type="match status" value="1"/>
</dbReference>
<dbReference type="SUPFAM" id="SSF54862">
    <property type="entry name" value="4Fe-4S ferredoxins"/>
    <property type="match status" value="1"/>
</dbReference>
<dbReference type="PROSITE" id="PS00198">
    <property type="entry name" value="4FE4S_FER_1"/>
    <property type="match status" value="2"/>
</dbReference>
<dbReference type="PROSITE" id="PS51379">
    <property type="entry name" value="4FE4S_FER_2"/>
    <property type="match status" value="2"/>
</dbReference>